<dbReference type="EC" id="2.8.2.-"/>
<dbReference type="EMBL" id="AF026073">
    <property type="protein sequence ID" value="AAC69919.1"/>
    <property type="molecule type" value="mRNA"/>
</dbReference>
<dbReference type="EMBL" id="U32371">
    <property type="protein sequence ID" value="AAC99889.1"/>
    <property type="status" value="ALT_FRAME"/>
    <property type="molecule type" value="mRNA"/>
</dbReference>
<dbReference type="EMBL" id="AK133530">
    <property type="protein sequence ID" value="BAE21709.1"/>
    <property type="molecule type" value="mRNA"/>
</dbReference>
<dbReference type="EMBL" id="AC158917">
    <property type="status" value="NOT_ANNOTATED_CDS"/>
    <property type="molecule type" value="Genomic_DNA"/>
</dbReference>
<dbReference type="EMBL" id="BC066190">
    <property type="protein sequence ID" value="AAH66190.1"/>
    <property type="molecule type" value="mRNA"/>
</dbReference>
<dbReference type="CCDS" id="CCDS39130.1"/>
<dbReference type="PIR" id="JE0197">
    <property type="entry name" value="JE0197"/>
</dbReference>
<dbReference type="RefSeq" id="NP_058051.3">
    <property type="nucleotide sequence ID" value="NM_016771.3"/>
</dbReference>
<dbReference type="PDB" id="2ZPT">
    <property type="method" value="X-ray"/>
    <property type="resolution" value="1.15 A"/>
    <property type="chains" value="X=1-295"/>
</dbReference>
<dbReference type="PDB" id="2ZVP">
    <property type="method" value="X-ray"/>
    <property type="resolution" value="1.30 A"/>
    <property type="chains" value="X=1-295"/>
</dbReference>
<dbReference type="PDB" id="2ZVQ">
    <property type="method" value="X-ray"/>
    <property type="resolution" value="1.30 A"/>
    <property type="chains" value="X=1-295"/>
</dbReference>
<dbReference type="PDB" id="2ZYT">
    <property type="method" value="X-ray"/>
    <property type="resolution" value="1.55 A"/>
    <property type="chains" value="X=1-295"/>
</dbReference>
<dbReference type="PDB" id="2ZYU">
    <property type="method" value="X-ray"/>
    <property type="resolution" value="1.80 A"/>
    <property type="chains" value="X=1-295"/>
</dbReference>
<dbReference type="PDB" id="2ZYV">
    <property type="method" value="X-ray"/>
    <property type="resolution" value="1.81 A"/>
    <property type="chains" value="X=1-295"/>
</dbReference>
<dbReference type="PDB" id="2ZYW">
    <property type="method" value="X-ray"/>
    <property type="resolution" value="1.80 A"/>
    <property type="chains" value="X=1-295"/>
</dbReference>
<dbReference type="PDBsum" id="2ZPT"/>
<dbReference type="PDBsum" id="2ZVP"/>
<dbReference type="PDBsum" id="2ZVQ"/>
<dbReference type="PDBsum" id="2ZYT"/>
<dbReference type="PDBsum" id="2ZYU"/>
<dbReference type="PDBsum" id="2ZYV"/>
<dbReference type="PDBsum" id="2ZYW"/>
<dbReference type="SMR" id="Q3UZZ6"/>
<dbReference type="BioGRID" id="207279">
    <property type="interactions" value="2"/>
</dbReference>
<dbReference type="FunCoup" id="Q3UZZ6">
    <property type="interactions" value="485"/>
</dbReference>
<dbReference type="IntAct" id="Q3UZZ6">
    <property type="interactions" value="1"/>
</dbReference>
<dbReference type="MINT" id="Q3UZZ6"/>
<dbReference type="STRING" id="10090.ENSMUSP00000108940"/>
<dbReference type="GlyGen" id="Q3UZZ6">
    <property type="glycosylation" value="1 site, 1 O-linked glycan (1 site)"/>
</dbReference>
<dbReference type="iPTMnet" id="Q3UZZ6"/>
<dbReference type="PhosphoSitePlus" id="Q3UZZ6"/>
<dbReference type="SwissPalm" id="Q3UZZ6"/>
<dbReference type="jPOST" id="Q3UZZ6"/>
<dbReference type="PaxDb" id="10090-ENSMUSP00000108940"/>
<dbReference type="PeptideAtlas" id="Q3UZZ6"/>
<dbReference type="ProteomicsDB" id="257428"/>
<dbReference type="DNASU" id="53315"/>
<dbReference type="Ensembl" id="ENSMUST00000113314.3">
    <property type="protein sequence ID" value="ENSMUSP00000108940.3"/>
    <property type="gene ID" value="ENSMUSG00000029273.11"/>
</dbReference>
<dbReference type="GeneID" id="53315"/>
<dbReference type="KEGG" id="mmu:53315"/>
<dbReference type="UCSC" id="uc008xyo.2">
    <property type="organism name" value="mouse"/>
</dbReference>
<dbReference type="AGR" id="MGI:1926341"/>
<dbReference type="CTD" id="53315"/>
<dbReference type="MGI" id="MGI:1926341">
    <property type="gene designation" value="Sult1d1"/>
</dbReference>
<dbReference type="VEuPathDB" id="HostDB:ENSMUSG00000029273"/>
<dbReference type="eggNOG" id="KOG1584">
    <property type="taxonomic scope" value="Eukaryota"/>
</dbReference>
<dbReference type="GeneTree" id="ENSGT00940000162879"/>
<dbReference type="HOGENOM" id="CLU_027239_1_2_1"/>
<dbReference type="InParanoid" id="Q3UZZ6"/>
<dbReference type="OMA" id="IAEEWSQ"/>
<dbReference type="OrthoDB" id="205623at2759"/>
<dbReference type="PhylomeDB" id="Q3UZZ6"/>
<dbReference type="TreeFam" id="TF321745"/>
<dbReference type="BRENDA" id="2.8.2.1">
    <property type="organism ID" value="3474"/>
</dbReference>
<dbReference type="BRENDA" id="2.8.2.9">
    <property type="organism ID" value="3474"/>
</dbReference>
<dbReference type="BioGRID-ORCS" id="53315">
    <property type="hits" value="2 hits in 76 CRISPR screens"/>
</dbReference>
<dbReference type="EvolutionaryTrace" id="Q3UZZ6"/>
<dbReference type="PRO" id="PR:Q3UZZ6"/>
<dbReference type="Proteomes" id="UP000000589">
    <property type="component" value="Chromosome 5"/>
</dbReference>
<dbReference type="RNAct" id="Q3UZZ6">
    <property type="molecule type" value="protein"/>
</dbReference>
<dbReference type="Bgee" id="ENSMUSG00000029273">
    <property type="expression patterns" value="Expressed in olfactory epithelium and 85 other cell types or tissues"/>
</dbReference>
<dbReference type="GO" id="GO:0005737">
    <property type="term" value="C:cytoplasm"/>
    <property type="evidence" value="ECO:0007669"/>
    <property type="project" value="UniProtKB-SubCell"/>
</dbReference>
<dbReference type="GO" id="GO:0004062">
    <property type="term" value="F:aryl sulfotransferase activity"/>
    <property type="evidence" value="ECO:0000314"/>
    <property type="project" value="MGI"/>
</dbReference>
<dbReference type="GO" id="GO:0008146">
    <property type="term" value="F:sulfotransferase activity"/>
    <property type="evidence" value="ECO:0000314"/>
    <property type="project" value="MGI"/>
</dbReference>
<dbReference type="GO" id="GO:0006584">
    <property type="term" value="P:catecholamine metabolic process"/>
    <property type="evidence" value="ECO:0007669"/>
    <property type="project" value="UniProtKB-KW"/>
</dbReference>
<dbReference type="GO" id="GO:0006629">
    <property type="term" value="P:lipid metabolic process"/>
    <property type="evidence" value="ECO:0007669"/>
    <property type="project" value="UniProtKB-KW"/>
</dbReference>
<dbReference type="GO" id="GO:0000103">
    <property type="term" value="P:sulfate assimilation"/>
    <property type="evidence" value="ECO:0000314"/>
    <property type="project" value="MGI"/>
</dbReference>
<dbReference type="GO" id="GO:0051923">
    <property type="term" value="P:sulfation"/>
    <property type="evidence" value="ECO:0000314"/>
    <property type="project" value="MGI"/>
</dbReference>
<dbReference type="FunFam" id="3.40.50.300:FF:000433">
    <property type="entry name" value="Estrogen sulfotransferase"/>
    <property type="match status" value="1"/>
</dbReference>
<dbReference type="Gene3D" id="3.40.50.300">
    <property type="entry name" value="P-loop containing nucleotide triphosphate hydrolases"/>
    <property type="match status" value="1"/>
</dbReference>
<dbReference type="InterPro" id="IPR027417">
    <property type="entry name" value="P-loop_NTPase"/>
</dbReference>
<dbReference type="InterPro" id="IPR000863">
    <property type="entry name" value="Sulfotransferase_dom"/>
</dbReference>
<dbReference type="PANTHER" id="PTHR11783">
    <property type="entry name" value="SULFOTRANSFERASE SULT"/>
    <property type="match status" value="1"/>
</dbReference>
<dbReference type="Pfam" id="PF00685">
    <property type="entry name" value="Sulfotransfer_1"/>
    <property type="match status" value="1"/>
</dbReference>
<dbReference type="SUPFAM" id="SSF52540">
    <property type="entry name" value="P-loop containing nucleoside triphosphate hydrolases"/>
    <property type="match status" value="1"/>
</dbReference>
<evidence type="ECO:0000269" key="1">
    <source>
    </source>
</evidence>
<evidence type="ECO:0000269" key="2">
    <source>
    </source>
</evidence>
<evidence type="ECO:0000269" key="3">
    <source>
    </source>
</evidence>
<evidence type="ECO:0000269" key="4">
    <source>
    </source>
</evidence>
<evidence type="ECO:0000269" key="5">
    <source>
    </source>
</evidence>
<evidence type="ECO:0000305" key="6"/>
<evidence type="ECO:0007829" key="7">
    <source>
        <dbReference type="PDB" id="2ZPT"/>
    </source>
</evidence>
<proteinExistence type="evidence at protein level"/>
<sequence>MDNKLDVFRRELVDVEGIPLFWSIAEHWSQVESFEARPDDILISTYPKSGTTWVSEILDLIYNNGDAEKCKRDAIYKRVPFMELIIPGITNGVEMLNNMPSPRIVKTHLPVQLLPSSFWKNDCKIIYVARNAKDVVVSYYYFYQMAKIHPEPGTWEEFLEKFMAGQVSFGPWYDHVKSWWEKRKEYRILYLFYEDMKENPKCEIQKILKFLEKDIPEEILNKILYHSSFSVMKENPSANYTTMMKEEMDHSVSPFMRKGISGDWKNQFTVAQYEKFEEDYVKKMEDSTLKFRSEI</sequence>
<gene>
    <name type="primary">Sult1d1</name>
    <name type="synonym">St1d1</name>
</gene>
<accession>Q3UZZ6</accession>
<accession>O35401</accession>
<accession>Q6NZD1</accession>
<accession>Q9R2C2</accession>
<name>ST1D1_MOUSE</name>
<keyword id="KW-0002">3D-structure</keyword>
<keyword id="KW-0128">Catecholamine metabolism</keyword>
<keyword id="KW-0963">Cytoplasm</keyword>
<keyword id="KW-0443">Lipid metabolism</keyword>
<keyword id="KW-1185">Reference proteome</keyword>
<keyword id="KW-0808">Transferase</keyword>
<organism>
    <name type="scientific">Mus musculus</name>
    <name type="common">Mouse</name>
    <dbReference type="NCBI Taxonomy" id="10090"/>
    <lineage>
        <taxon>Eukaryota</taxon>
        <taxon>Metazoa</taxon>
        <taxon>Chordata</taxon>
        <taxon>Craniata</taxon>
        <taxon>Vertebrata</taxon>
        <taxon>Euteleostomi</taxon>
        <taxon>Mammalia</taxon>
        <taxon>Eutheria</taxon>
        <taxon>Euarchontoglires</taxon>
        <taxon>Glires</taxon>
        <taxon>Rodentia</taxon>
        <taxon>Myomorpha</taxon>
        <taxon>Muroidea</taxon>
        <taxon>Muridae</taxon>
        <taxon>Murinae</taxon>
        <taxon>Mus</taxon>
        <taxon>Mus</taxon>
    </lineage>
</organism>
<protein>
    <recommendedName>
        <fullName>Sulfotransferase 1 family member D1</fullName>
        <shortName>ST1D1</shortName>
        <ecNumber>2.8.2.-</ecNumber>
    </recommendedName>
    <alternativeName>
        <fullName>Amine N-sulfotransferase</fullName>
        <shortName>SULT-N</shortName>
    </alternativeName>
    <alternativeName>
        <fullName>Dopamine sulfotransferase Sult1d1</fullName>
    </alternativeName>
    <alternativeName>
        <fullName>Tyrosine-ester sulfotransferase</fullName>
    </alternativeName>
</protein>
<feature type="chain" id="PRO_0000416459" description="Sulfotransferase 1 family member D1">
    <location>
        <begin position="1"/>
        <end position="295"/>
    </location>
</feature>
<feature type="active site" description="Proton acceptor" evidence="6">
    <location>
        <position position="108"/>
    </location>
</feature>
<feature type="binding site">
    <location>
        <begin position="48"/>
        <end position="53"/>
    </location>
    <ligand>
        <name>3'-phosphoadenylyl sulfate</name>
        <dbReference type="ChEBI" id="CHEBI:58339"/>
    </ligand>
</feature>
<feature type="binding site">
    <location>
        <position position="81"/>
    </location>
    <ligand>
        <name>substrate</name>
    </ligand>
</feature>
<feature type="binding site">
    <location>
        <begin position="106"/>
        <end position="108"/>
    </location>
    <ligand>
        <name>substrate</name>
    </ligand>
</feature>
<feature type="binding site">
    <location>
        <position position="130"/>
    </location>
    <ligand>
        <name>3'-phosphoadenylyl sulfate</name>
        <dbReference type="ChEBI" id="CHEBI:58339"/>
    </ligand>
</feature>
<feature type="binding site">
    <location>
        <position position="138"/>
    </location>
    <ligand>
        <name>3'-phosphoadenylyl sulfate</name>
        <dbReference type="ChEBI" id="CHEBI:58339"/>
    </ligand>
</feature>
<feature type="binding site">
    <location>
        <position position="142"/>
    </location>
    <ligand>
        <name>substrate</name>
    </ligand>
</feature>
<feature type="binding site">
    <location>
        <position position="193"/>
    </location>
    <ligand>
        <name>3'-phosphoadenylyl sulfate</name>
        <dbReference type="ChEBI" id="CHEBI:58339"/>
    </ligand>
</feature>
<feature type="binding site">
    <location>
        <begin position="227"/>
        <end position="232"/>
    </location>
    <ligand>
        <name>3'-phosphoadenylyl sulfate</name>
        <dbReference type="ChEBI" id="CHEBI:58339"/>
    </ligand>
</feature>
<feature type="binding site">
    <location>
        <begin position="257"/>
        <end position="259"/>
    </location>
    <ligand>
        <name>3'-phosphoadenylyl sulfate</name>
        <dbReference type="ChEBI" id="CHEBI:58339"/>
    </ligand>
</feature>
<feature type="mutagenesis site" description="No effect on enzyme activity against dopamine." evidence="2">
    <original>E</original>
    <variation>A</variation>
    <location>
        <position position="247"/>
    </location>
</feature>
<feature type="mutagenesis site" description="Reduces enzyme activity against dopamine." evidence="2">
    <original>E</original>
    <variation>L</variation>
    <location>
        <position position="247"/>
    </location>
</feature>
<feature type="sequence conflict" description="In Ref. 1; AAC69919." evidence="6" ref="1">
    <original>K</original>
    <variation>Q</variation>
    <location>
        <position position="206"/>
    </location>
</feature>
<feature type="sequence conflict" description="In Ref. 1; AAC69919." evidence="6" ref="1">
    <original>F</original>
    <variation>Y</variation>
    <location>
        <position position="210"/>
    </location>
</feature>
<feature type="sequence conflict" description="In Ref. 5; AAH66190." evidence="6" ref="5">
    <original>E</original>
    <variation>G</variation>
    <location>
        <position position="234"/>
    </location>
</feature>
<feature type="strand" evidence="7">
    <location>
        <begin position="13"/>
        <end position="15"/>
    </location>
</feature>
<feature type="strand" evidence="7">
    <location>
        <begin position="18"/>
        <end position="20"/>
    </location>
</feature>
<feature type="helix" evidence="7">
    <location>
        <begin position="22"/>
        <end position="26"/>
    </location>
</feature>
<feature type="helix" evidence="7">
    <location>
        <begin position="28"/>
        <end position="32"/>
    </location>
</feature>
<feature type="strand" evidence="7">
    <location>
        <begin position="41"/>
        <end position="46"/>
    </location>
</feature>
<feature type="helix" evidence="7">
    <location>
        <begin position="51"/>
        <end position="62"/>
    </location>
</feature>
<feature type="turn" evidence="7">
    <location>
        <begin position="63"/>
        <end position="65"/>
    </location>
</feature>
<feature type="helix" evidence="7">
    <location>
        <begin position="69"/>
        <end position="71"/>
    </location>
</feature>
<feature type="helix" evidence="7">
    <location>
        <begin position="75"/>
        <end position="78"/>
    </location>
</feature>
<feature type="turn" evidence="7">
    <location>
        <begin position="87"/>
        <end position="89"/>
    </location>
</feature>
<feature type="helix" evidence="7">
    <location>
        <begin position="92"/>
        <end position="97"/>
    </location>
</feature>
<feature type="strand" evidence="7">
    <location>
        <begin position="104"/>
        <end position="107"/>
    </location>
</feature>
<feature type="helix" evidence="7">
    <location>
        <begin position="111"/>
        <end position="113"/>
    </location>
</feature>
<feature type="helix" evidence="7">
    <location>
        <begin position="117"/>
        <end position="120"/>
    </location>
</feature>
<feature type="strand" evidence="7">
    <location>
        <begin position="124"/>
        <end position="129"/>
    </location>
</feature>
<feature type="helix" evidence="7">
    <location>
        <begin position="132"/>
        <end position="145"/>
    </location>
</feature>
<feature type="helix" evidence="7">
    <location>
        <begin position="155"/>
        <end position="163"/>
    </location>
</feature>
<feature type="helix" evidence="7">
    <location>
        <begin position="172"/>
        <end position="182"/>
    </location>
</feature>
<feature type="turn" evidence="7">
    <location>
        <begin position="183"/>
        <end position="185"/>
    </location>
</feature>
<feature type="strand" evidence="7">
    <location>
        <begin position="188"/>
        <end position="192"/>
    </location>
</feature>
<feature type="helix" evidence="7">
    <location>
        <begin position="193"/>
        <end position="198"/>
    </location>
</feature>
<feature type="helix" evidence="7">
    <location>
        <begin position="200"/>
        <end position="210"/>
    </location>
</feature>
<feature type="helix" evidence="7">
    <location>
        <begin position="217"/>
        <end position="226"/>
    </location>
</feature>
<feature type="helix" evidence="7">
    <location>
        <begin position="229"/>
        <end position="234"/>
    </location>
</feature>
<feature type="turn" evidence="7">
    <location>
        <begin position="236"/>
        <end position="238"/>
    </location>
</feature>
<feature type="turn" evidence="7">
    <location>
        <begin position="245"/>
        <end position="247"/>
    </location>
</feature>
<feature type="turn" evidence="7">
    <location>
        <begin position="250"/>
        <end position="252"/>
    </location>
</feature>
<feature type="helix" evidence="7">
    <location>
        <begin position="264"/>
        <end position="267"/>
    </location>
</feature>
<feature type="helix" evidence="7">
    <location>
        <begin position="270"/>
        <end position="284"/>
    </location>
</feature>
<reference key="1">
    <citation type="journal article" date="1998" name="Biochem. Biophys. Res. Commun.">
        <title>Molecular cloning, expression, and functional characterization of novel mouse sulfotransferases.</title>
        <authorList>
            <person name="Sakakibara Y."/>
            <person name="Yanagisawa K."/>
            <person name="Takami Y."/>
            <person name="Nakayama T."/>
            <person name="Suiko M."/>
            <person name="Liu M.-C."/>
        </authorList>
    </citation>
    <scope>NUCLEOTIDE SEQUENCE [MRNA]</scope>
    <scope>FUNCTION</scope>
    <scope>TISSUE SPECIFICITY</scope>
</reference>
<reference key="2">
    <citation type="journal article" date="1999" name="Biochem. Biophys. Res. Commun.">
        <title>Bacterial expression, purification, and characterization of a novel mouse sulfotransferase that catalyzes the sulfation of eicosanoids.</title>
        <authorList>
            <person name="Liu M.C."/>
            <person name="Sakakibara Y."/>
            <person name="Liu C.C."/>
        </authorList>
    </citation>
    <scope>NUCLEOTIDE SEQUENCE [MRNA]</scope>
    <scope>FUNCTION</scope>
</reference>
<reference key="3">
    <citation type="journal article" date="2004" name="J. Pharmacol. Exp. Ther.">
        <title>Unique properties of a renal sulfotransferase, St1d1, in dopamine metabolism.</title>
        <authorList>
            <person name="Shimada M."/>
            <person name="Terazawa R."/>
            <person name="Kamiyama Y."/>
            <person name="Honma W."/>
            <person name="Nagata K."/>
            <person name="Yamazoe Y."/>
        </authorList>
    </citation>
    <scope>NUCLEOTIDE SEQUENCE [MRNA]</scope>
    <scope>FUNCTION</scope>
</reference>
<reference key="4">
    <citation type="submission" date="1995-07" db="EMBL/GenBank/DDBJ databases">
        <title>Molecular cloning of cDNA encoding tyrosine-ester sulfotransferase from mouse kidney.</title>
        <authorList>
            <person name="Herrmann A."/>
            <person name="Stoffel W."/>
        </authorList>
    </citation>
    <scope>NUCLEOTIDE SEQUENCE [MRNA]</scope>
    <source>
        <strain>BALB/cJ</strain>
        <tissue>Kidney</tissue>
    </source>
</reference>
<reference key="5">
    <citation type="journal article" date="2005" name="Science">
        <title>The transcriptional landscape of the mammalian genome.</title>
        <authorList>
            <person name="Carninci P."/>
            <person name="Kasukawa T."/>
            <person name="Katayama S."/>
            <person name="Gough J."/>
            <person name="Frith M.C."/>
            <person name="Maeda N."/>
            <person name="Oyama R."/>
            <person name="Ravasi T."/>
            <person name="Lenhard B."/>
            <person name="Wells C."/>
            <person name="Kodzius R."/>
            <person name="Shimokawa K."/>
            <person name="Bajic V.B."/>
            <person name="Brenner S.E."/>
            <person name="Batalov S."/>
            <person name="Forrest A.R."/>
            <person name="Zavolan M."/>
            <person name="Davis M.J."/>
            <person name="Wilming L.G."/>
            <person name="Aidinis V."/>
            <person name="Allen J.E."/>
            <person name="Ambesi-Impiombato A."/>
            <person name="Apweiler R."/>
            <person name="Aturaliya R.N."/>
            <person name="Bailey T.L."/>
            <person name="Bansal M."/>
            <person name="Baxter L."/>
            <person name="Beisel K.W."/>
            <person name="Bersano T."/>
            <person name="Bono H."/>
            <person name="Chalk A.M."/>
            <person name="Chiu K.P."/>
            <person name="Choudhary V."/>
            <person name="Christoffels A."/>
            <person name="Clutterbuck D.R."/>
            <person name="Crowe M.L."/>
            <person name="Dalla E."/>
            <person name="Dalrymple B.P."/>
            <person name="de Bono B."/>
            <person name="Della Gatta G."/>
            <person name="di Bernardo D."/>
            <person name="Down T."/>
            <person name="Engstrom P."/>
            <person name="Fagiolini M."/>
            <person name="Faulkner G."/>
            <person name="Fletcher C.F."/>
            <person name="Fukushima T."/>
            <person name="Furuno M."/>
            <person name="Futaki S."/>
            <person name="Gariboldi M."/>
            <person name="Georgii-Hemming P."/>
            <person name="Gingeras T.R."/>
            <person name="Gojobori T."/>
            <person name="Green R.E."/>
            <person name="Gustincich S."/>
            <person name="Harbers M."/>
            <person name="Hayashi Y."/>
            <person name="Hensch T.K."/>
            <person name="Hirokawa N."/>
            <person name="Hill D."/>
            <person name="Huminiecki L."/>
            <person name="Iacono M."/>
            <person name="Ikeo K."/>
            <person name="Iwama A."/>
            <person name="Ishikawa T."/>
            <person name="Jakt M."/>
            <person name="Kanapin A."/>
            <person name="Katoh M."/>
            <person name="Kawasawa Y."/>
            <person name="Kelso J."/>
            <person name="Kitamura H."/>
            <person name="Kitano H."/>
            <person name="Kollias G."/>
            <person name="Krishnan S.P."/>
            <person name="Kruger A."/>
            <person name="Kummerfeld S.K."/>
            <person name="Kurochkin I.V."/>
            <person name="Lareau L.F."/>
            <person name="Lazarevic D."/>
            <person name="Lipovich L."/>
            <person name="Liu J."/>
            <person name="Liuni S."/>
            <person name="McWilliam S."/>
            <person name="Madan Babu M."/>
            <person name="Madera M."/>
            <person name="Marchionni L."/>
            <person name="Matsuda H."/>
            <person name="Matsuzawa S."/>
            <person name="Miki H."/>
            <person name="Mignone F."/>
            <person name="Miyake S."/>
            <person name="Morris K."/>
            <person name="Mottagui-Tabar S."/>
            <person name="Mulder N."/>
            <person name="Nakano N."/>
            <person name="Nakauchi H."/>
            <person name="Ng P."/>
            <person name="Nilsson R."/>
            <person name="Nishiguchi S."/>
            <person name="Nishikawa S."/>
            <person name="Nori F."/>
            <person name="Ohara O."/>
            <person name="Okazaki Y."/>
            <person name="Orlando V."/>
            <person name="Pang K.C."/>
            <person name="Pavan W.J."/>
            <person name="Pavesi G."/>
            <person name="Pesole G."/>
            <person name="Petrovsky N."/>
            <person name="Piazza S."/>
            <person name="Reed J."/>
            <person name="Reid J.F."/>
            <person name="Ring B.Z."/>
            <person name="Ringwald M."/>
            <person name="Rost B."/>
            <person name="Ruan Y."/>
            <person name="Salzberg S.L."/>
            <person name="Sandelin A."/>
            <person name="Schneider C."/>
            <person name="Schoenbach C."/>
            <person name="Sekiguchi K."/>
            <person name="Semple C.A."/>
            <person name="Seno S."/>
            <person name="Sessa L."/>
            <person name="Sheng Y."/>
            <person name="Shibata Y."/>
            <person name="Shimada H."/>
            <person name="Shimada K."/>
            <person name="Silva D."/>
            <person name="Sinclair B."/>
            <person name="Sperling S."/>
            <person name="Stupka E."/>
            <person name="Sugiura K."/>
            <person name="Sultana R."/>
            <person name="Takenaka Y."/>
            <person name="Taki K."/>
            <person name="Tammoja K."/>
            <person name="Tan S.L."/>
            <person name="Tang S."/>
            <person name="Taylor M.S."/>
            <person name="Tegner J."/>
            <person name="Teichmann S.A."/>
            <person name="Ueda H.R."/>
            <person name="van Nimwegen E."/>
            <person name="Verardo R."/>
            <person name="Wei C.L."/>
            <person name="Yagi K."/>
            <person name="Yamanishi H."/>
            <person name="Zabarovsky E."/>
            <person name="Zhu S."/>
            <person name="Zimmer A."/>
            <person name="Hide W."/>
            <person name="Bult C."/>
            <person name="Grimmond S.M."/>
            <person name="Teasdale R.D."/>
            <person name="Liu E.T."/>
            <person name="Brusic V."/>
            <person name="Quackenbush J."/>
            <person name="Wahlestedt C."/>
            <person name="Mattick J.S."/>
            <person name="Hume D.A."/>
            <person name="Kai C."/>
            <person name="Sasaki D."/>
            <person name="Tomaru Y."/>
            <person name="Fukuda S."/>
            <person name="Kanamori-Katayama M."/>
            <person name="Suzuki M."/>
            <person name="Aoki J."/>
            <person name="Arakawa T."/>
            <person name="Iida J."/>
            <person name="Imamura K."/>
            <person name="Itoh M."/>
            <person name="Kato T."/>
            <person name="Kawaji H."/>
            <person name="Kawagashira N."/>
            <person name="Kawashima T."/>
            <person name="Kojima M."/>
            <person name="Kondo S."/>
            <person name="Konno H."/>
            <person name="Nakano K."/>
            <person name="Ninomiya N."/>
            <person name="Nishio T."/>
            <person name="Okada M."/>
            <person name="Plessy C."/>
            <person name="Shibata K."/>
            <person name="Shiraki T."/>
            <person name="Suzuki S."/>
            <person name="Tagami M."/>
            <person name="Waki K."/>
            <person name="Watahiki A."/>
            <person name="Okamura-Oho Y."/>
            <person name="Suzuki H."/>
            <person name="Kawai J."/>
            <person name="Hayashizaki Y."/>
        </authorList>
    </citation>
    <scope>NUCLEOTIDE SEQUENCE [LARGE SCALE MRNA]</scope>
    <source>
        <strain>C57BL/6J</strain>
        <tissue>Ovary</tissue>
        <tissue>Uterus</tissue>
    </source>
</reference>
<reference key="6">
    <citation type="journal article" date="2009" name="PLoS Biol.">
        <title>Lineage-specific biology revealed by a finished genome assembly of the mouse.</title>
        <authorList>
            <person name="Church D.M."/>
            <person name="Goodstadt L."/>
            <person name="Hillier L.W."/>
            <person name="Zody M.C."/>
            <person name="Goldstein S."/>
            <person name="She X."/>
            <person name="Bult C.J."/>
            <person name="Agarwala R."/>
            <person name="Cherry J.L."/>
            <person name="DiCuccio M."/>
            <person name="Hlavina W."/>
            <person name="Kapustin Y."/>
            <person name="Meric P."/>
            <person name="Maglott D."/>
            <person name="Birtle Z."/>
            <person name="Marques A.C."/>
            <person name="Graves T."/>
            <person name="Zhou S."/>
            <person name="Teague B."/>
            <person name="Potamousis K."/>
            <person name="Churas C."/>
            <person name="Place M."/>
            <person name="Herschleb J."/>
            <person name="Runnheim R."/>
            <person name="Forrest D."/>
            <person name="Amos-Landgraf J."/>
            <person name="Schwartz D.C."/>
            <person name="Cheng Z."/>
            <person name="Lindblad-Toh K."/>
            <person name="Eichler E.E."/>
            <person name="Ponting C.P."/>
        </authorList>
    </citation>
    <scope>NUCLEOTIDE SEQUENCE [LARGE SCALE GENOMIC DNA]</scope>
    <source>
        <strain>C57BL/6J</strain>
    </source>
</reference>
<reference key="7">
    <citation type="journal article" date="2004" name="Genome Res.">
        <title>The status, quality, and expansion of the NIH full-length cDNA project: the Mammalian Gene Collection (MGC).</title>
        <authorList>
            <consortium name="The MGC Project Team"/>
        </authorList>
    </citation>
    <scope>NUCLEOTIDE SEQUENCE [LARGE SCALE MRNA]</scope>
    <source>
        <strain>C57BL/6J</strain>
        <tissue>Kidney</tissue>
    </source>
</reference>
<reference key="8">
    <citation type="journal article" date="2010" name="Cell">
        <title>A tissue-specific atlas of mouse protein phosphorylation and expression.</title>
        <authorList>
            <person name="Huttlin E.L."/>
            <person name="Jedrychowski M.P."/>
            <person name="Elias J.E."/>
            <person name="Goswami T."/>
            <person name="Rad R."/>
            <person name="Beausoleil S.A."/>
            <person name="Villen J."/>
            <person name="Haas W."/>
            <person name="Sowa M.E."/>
            <person name="Gygi S.P."/>
        </authorList>
    </citation>
    <scope>IDENTIFICATION BY MASS SPECTROMETRY [LARGE SCALE ANALYSIS]</scope>
    <source>
        <tissue>Kidney</tissue>
        <tissue>Liver</tissue>
        <tissue>Lung</tissue>
    </source>
</reference>
<reference key="9">
    <citation type="journal article" date="2010" name="Endocrinology">
        <title>Glucocorticoids stimulate hepatic and renal catecholamine inactivation by direct rapid induction of the dopamine sulfotransferase Sult1d1.</title>
        <authorList>
            <person name="Wong S."/>
            <person name="Tan K."/>
            <person name="Carey K.T."/>
            <person name="Fukushima A."/>
            <person name="Tiganis T."/>
            <person name="Cole T.J."/>
        </authorList>
    </citation>
    <scope>FUNCTION</scope>
    <scope>SUBCELLULAR LOCATION</scope>
    <scope>TISSUE SPECIFICITY</scope>
    <scope>INDUCTION</scope>
</reference>
<reference key="10">
    <citation type="journal article" date="2008" name="FEBS Lett.">
        <title>Crystal structure of mSULT1D1, a mouse catecholamine sulfotransferase.</title>
        <authorList>
            <person name="Teramoto T."/>
            <person name="Sakakibara Y."/>
            <person name="Inada K."/>
            <person name="Kurogi K."/>
            <person name="Liu M.C."/>
            <person name="Suiko M."/>
            <person name="Kimura M."/>
            <person name="Kakuta Y."/>
        </authorList>
    </citation>
    <scope>X-RAY CRYSTALLOGRAPHY (1.15 ANGSTROMS) IN COMPLEX WITH ADENOSINE-3'-5'-DIPHOSPHATE</scope>
    <scope>FUNCTION</scope>
    <scope>MUTAGENESIS OF GLU-247</scope>
</reference>
<reference key="11">
    <citation type="journal article" date="2009" name="Biochem. Biophys. Res. Commun.">
        <title>Structural basis for the broad range substrate specificity of a novel mouse cytosolic sulfotransferase--mSULT1D1.</title>
        <authorList>
            <person name="Teramoto T."/>
            <person name="Sakakibara Y."/>
            <person name="Liu M.C."/>
            <person name="Suiko M."/>
            <person name="Kimura M."/>
            <person name="Kakuta Y."/>
        </authorList>
    </citation>
    <scope>X-RAY CRYSTALLOGRAPHY (1.30 ANGSTROMS) IN COMPLEXES WITH 1-NAPHTHOL; ADENOSINE-3'-5'-DIPHOSPHATE AND P-NITROPHENOL</scope>
</reference>
<reference key="12">
    <citation type="journal article" date="2009" name="Biochem. Biophys. Res. Commun.">
        <title>Snapshot of a Michaelis complex in a sulfuryl transfer reaction: Crystal structure of a mouse sulfotransferase, mSULT1D1, complexed with donor substrate and accepter substrate.</title>
        <authorList>
            <person name="Teramoto T."/>
            <person name="Sakakibara Y."/>
            <person name="Liu M.C."/>
            <person name="Suiko M."/>
            <person name="Kimura M."/>
            <person name="Kakuta Y."/>
        </authorList>
    </citation>
    <scope>X-RAY CRYSTALLOGRAPHY (1.55 ANGSTROMS) IN COMPLEXES WITH 3'-PHOSPHO-5'-ADENYLYL SULFATE AND P-NITROPHENOL</scope>
</reference>
<comment type="function">
    <text evidence="1 2 3 4 5">Sulfotransferase with broad substrate specificity that utilizes 3'-phospho-5'-adenylyl sulfate (PAPS) as sulfonate donor to catalyze the sulfate conjugation of catecholamines, such as dopamine, prostaglandins, leukotriene E4, drugs and xenobiotic compounds. Has sulfotransferase activity towards p-nitrophenol, 2-naphthylamine and minoxidil (in vitro). Sulfonation increases the water solubility of most compounds, and therefore their renal excretion, but it can also result in bioactivation to form active metabolites.</text>
</comment>
<comment type="subcellular location">
    <subcellularLocation>
        <location evidence="3">Cytoplasm</location>
    </subcellularLocation>
</comment>
<comment type="tissue specificity">
    <text evidence="3 4">Detected in kidney and liver. Detected in kidney collecting duct cells.</text>
</comment>
<comment type="induction">
    <text evidence="3">Up-regulated in liver and kidney by dexamethasone, a glucocorticoid analog.</text>
</comment>
<comment type="similarity">
    <text evidence="6">Belongs to the sulfotransferase 1 family.</text>
</comment>
<comment type="sequence caution" evidence="6">
    <conflict type="frameshift">
        <sequence resource="EMBL-CDS" id="AAC99889"/>
    </conflict>
</comment>